<organism>
    <name type="scientific">Ruthia magnifica subsp. Calyptogena magnifica</name>
    <dbReference type="NCBI Taxonomy" id="413404"/>
    <lineage>
        <taxon>Bacteria</taxon>
        <taxon>Pseudomonadati</taxon>
        <taxon>Pseudomonadota</taxon>
        <taxon>Gammaproteobacteria</taxon>
        <taxon>Candidatus Pseudothioglobaceae</taxon>
        <taxon>Candidatus Ruthturnera</taxon>
    </lineage>
</organism>
<sequence>MAEKQIHTFQTEVSQLLDLMIHSLYSNKEIFLRELVSNSSDAVDKLKFKSLSDDTLIEGKEELQIHINTNKDASTITITDNGIGMTEAEVNKNIGTIANSGTKKFLKSLDEKQTKDSNLIGQFGVGFYSSFIVADKVELITRKAGSKSKKGTKWTSTGKGKYSIERVNCLNFGTSVTLHIKKDEKEFLDDYRLRGIISKYSDHITVPIMMIKASEDGKDIEYERINKANAFWSQDKRDLKQENYDEFYKSLTYDFEAPLTQLHNRVEGNIDYTSLLFIPSKAPHDMWEPKRKGGIKLYAKRVFIMEDNEALMPLYLRFVKGVIDTADLPLNVSREILQGNKVVDTIRKASVSRVLKELEKMAKNKPEDYEKFWQEFGMVMKEGVVEDFANKDKIAKLLRFTTNKSESAAQTATLECYVKSMQKDQKAIYYITAETYEAAKGSPHLEIFNQKDIEVLLLSDRVDEWMVNNFGKFEDVPLKSITKGDLEGLDSKEEKKAKEEVSKNFEKVIEKMQKILDTQVKEIKVSSRLSDSPSCLVVDENEMGGNMERIMKSLGQDVPDTKPILEINPNHPLVKKLKTKIDEDLVKVLFDQAVLSEGVQLKDPAEFVKRINKLIN</sequence>
<protein>
    <recommendedName>
        <fullName evidence="1">Chaperone protein HtpG</fullName>
    </recommendedName>
    <alternativeName>
        <fullName evidence="1">Heat shock protein HtpG</fullName>
    </alternativeName>
    <alternativeName>
        <fullName evidence="1">High temperature protein G</fullName>
    </alternativeName>
</protein>
<dbReference type="EMBL" id="CP000488">
    <property type="protein sequence ID" value="ABL02249.1"/>
    <property type="molecule type" value="Genomic_DNA"/>
</dbReference>
<dbReference type="RefSeq" id="WP_011737874.1">
    <property type="nucleotide sequence ID" value="NC_008610.1"/>
</dbReference>
<dbReference type="SMR" id="A1AWE2"/>
<dbReference type="STRING" id="413404.Rmag_0493"/>
<dbReference type="KEGG" id="rma:Rmag_0493"/>
<dbReference type="eggNOG" id="COG0326">
    <property type="taxonomic scope" value="Bacteria"/>
</dbReference>
<dbReference type="HOGENOM" id="CLU_006684_3_0_6"/>
<dbReference type="OrthoDB" id="9802640at2"/>
<dbReference type="Proteomes" id="UP000002587">
    <property type="component" value="Chromosome"/>
</dbReference>
<dbReference type="GO" id="GO:0005737">
    <property type="term" value="C:cytoplasm"/>
    <property type="evidence" value="ECO:0007669"/>
    <property type="project" value="UniProtKB-SubCell"/>
</dbReference>
<dbReference type="GO" id="GO:0005524">
    <property type="term" value="F:ATP binding"/>
    <property type="evidence" value="ECO:0007669"/>
    <property type="project" value="UniProtKB-UniRule"/>
</dbReference>
<dbReference type="GO" id="GO:0016887">
    <property type="term" value="F:ATP hydrolysis activity"/>
    <property type="evidence" value="ECO:0007669"/>
    <property type="project" value="InterPro"/>
</dbReference>
<dbReference type="GO" id="GO:0140662">
    <property type="term" value="F:ATP-dependent protein folding chaperone"/>
    <property type="evidence" value="ECO:0007669"/>
    <property type="project" value="InterPro"/>
</dbReference>
<dbReference type="GO" id="GO:0051082">
    <property type="term" value="F:unfolded protein binding"/>
    <property type="evidence" value="ECO:0007669"/>
    <property type="project" value="UniProtKB-UniRule"/>
</dbReference>
<dbReference type="CDD" id="cd16927">
    <property type="entry name" value="HATPase_Hsp90-like"/>
    <property type="match status" value="1"/>
</dbReference>
<dbReference type="FunFam" id="3.30.230.80:FF:000002">
    <property type="entry name" value="Molecular chaperone HtpG"/>
    <property type="match status" value="1"/>
</dbReference>
<dbReference type="FunFam" id="3.30.565.10:FF:000009">
    <property type="entry name" value="Molecular chaperone HtpG"/>
    <property type="match status" value="1"/>
</dbReference>
<dbReference type="Gene3D" id="3.30.230.80">
    <property type="match status" value="1"/>
</dbReference>
<dbReference type="Gene3D" id="3.40.50.11260">
    <property type="match status" value="1"/>
</dbReference>
<dbReference type="Gene3D" id="1.20.120.790">
    <property type="entry name" value="Heat shock protein 90, C-terminal domain"/>
    <property type="match status" value="1"/>
</dbReference>
<dbReference type="Gene3D" id="3.30.565.10">
    <property type="entry name" value="Histidine kinase-like ATPase, C-terminal domain"/>
    <property type="match status" value="1"/>
</dbReference>
<dbReference type="HAMAP" id="MF_00505">
    <property type="entry name" value="HSP90"/>
    <property type="match status" value="1"/>
</dbReference>
<dbReference type="InterPro" id="IPR036890">
    <property type="entry name" value="HATPase_C_sf"/>
</dbReference>
<dbReference type="InterPro" id="IPR019805">
    <property type="entry name" value="Heat_shock_protein_90_CS"/>
</dbReference>
<dbReference type="InterPro" id="IPR037196">
    <property type="entry name" value="HSP90_C"/>
</dbReference>
<dbReference type="InterPro" id="IPR001404">
    <property type="entry name" value="Hsp90_fam"/>
</dbReference>
<dbReference type="InterPro" id="IPR020575">
    <property type="entry name" value="Hsp90_N"/>
</dbReference>
<dbReference type="InterPro" id="IPR020568">
    <property type="entry name" value="Ribosomal_Su5_D2-typ_SF"/>
</dbReference>
<dbReference type="NCBIfam" id="NF003555">
    <property type="entry name" value="PRK05218.1"/>
    <property type="match status" value="1"/>
</dbReference>
<dbReference type="PANTHER" id="PTHR11528">
    <property type="entry name" value="HEAT SHOCK PROTEIN 90 FAMILY MEMBER"/>
    <property type="match status" value="1"/>
</dbReference>
<dbReference type="Pfam" id="PF13589">
    <property type="entry name" value="HATPase_c_3"/>
    <property type="match status" value="1"/>
</dbReference>
<dbReference type="Pfam" id="PF00183">
    <property type="entry name" value="HSP90"/>
    <property type="match status" value="1"/>
</dbReference>
<dbReference type="PIRSF" id="PIRSF002583">
    <property type="entry name" value="Hsp90"/>
    <property type="match status" value="1"/>
</dbReference>
<dbReference type="PRINTS" id="PR00775">
    <property type="entry name" value="HEATSHOCK90"/>
</dbReference>
<dbReference type="SMART" id="SM00387">
    <property type="entry name" value="HATPase_c"/>
    <property type="match status" value="1"/>
</dbReference>
<dbReference type="SUPFAM" id="SSF55874">
    <property type="entry name" value="ATPase domain of HSP90 chaperone/DNA topoisomerase II/histidine kinase"/>
    <property type="match status" value="1"/>
</dbReference>
<dbReference type="SUPFAM" id="SSF110942">
    <property type="entry name" value="HSP90 C-terminal domain"/>
    <property type="match status" value="1"/>
</dbReference>
<dbReference type="SUPFAM" id="SSF54211">
    <property type="entry name" value="Ribosomal protein S5 domain 2-like"/>
    <property type="match status" value="1"/>
</dbReference>
<dbReference type="PROSITE" id="PS00298">
    <property type="entry name" value="HSP90"/>
    <property type="match status" value="1"/>
</dbReference>
<name>HTPG_RUTMC</name>
<accession>A1AWE2</accession>
<feature type="chain" id="PRO_1000014949" description="Chaperone protein HtpG">
    <location>
        <begin position="1"/>
        <end position="616"/>
    </location>
</feature>
<feature type="region of interest" description="A; substrate-binding" evidence="1">
    <location>
        <begin position="1"/>
        <end position="334"/>
    </location>
</feature>
<feature type="region of interest" description="B" evidence="1">
    <location>
        <begin position="335"/>
        <end position="549"/>
    </location>
</feature>
<feature type="region of interest" description="C" evidence="1">
    <location>
        <begin position="550"/>
        <end position="616"/>
    </location>
</feature>
<gene>
    <name evidence="1" type="primary">htpG</name>
    <name type="ordered locus">Rmag_0493</name>
</gene>
<evidence type="ECO:0000255" key="1">
    <source>
        <dbReference type="HAMAP-Rule" id="MF_00505"/>
    </source>
</evidence>
<comment type="function">
    <text evidence="1">Molecular chaperone. Has ATPase activity.</text>
</comment>
<comment type="subunit">
    <text evidence="1">Homodimer.</text>
</comment>
<comment type="subcellular location">
    <subcellularLocation>
        <location evidence="1">Cytoplasm</location>
    </subcellularLocation>
</comment>
<comment type="similarity">
    <text evidence="1">Belongs to the heat shock protein 90 family.</text>
</comment>
<proteinExistence type="inferred from homology"/>
<reference key="1">
    <citation type="journal article" date="2007" name="Science">
        <title>The Calyptogena magnifica chemoautotrophic symbiont genome.</title>
        <authorList>
            <person name="Newton I.L.G."/>
            <person name="Woyke T."/>
            <person name="Auchtung T.A."/>
            <person name="Dilly G.F."/>
            <person name="Dutton R.J."/>
            <person name="Fisher M.C."/>
            <person name="Fontanez K.M."/>
            <person name="Lau E."/>
            <person name="Stewart F.J."/>
            <person name="Richardson P.M."/>
            <person name="Barry K.W."/>
            <person name="Saunders E."/>
            <person name="Detter J.C."/>
            <person name="Wu D."/>
            <person name="Eisen J.A."/>
            <person name="Cavanaugh C.M."/>
        </authorList>
    </citation>
    <scope>NUCLEOTIDE SEQUENCE [LARGE SCALE GENOMIC DNA]</scope>
</reference>
<keyword id="KW-0067">ATP-binding</keyword>
<keyword id="KW-0143">Chaperone</keyword>
<keyword id="KW-0963">Cytoplasm</keyword>
<keyword id="KW-0547">Nucleotide-binding</keyword>
<keyword id="KW-0346">Stress response</keyword>